<evidence type="ECO:0000269" key="1">
    <source>
    </source>
</evidence>
<evidence type="ECO:0000269" key="2">
    <source>
    </source>
</evidence>
<evidence type="ECO:0000269" key="3">
    <source>
    </source>
</evidence>
<evidence type="ECO:0000269" key="4">
    <source>
    </source>
</evidence>
<evidence type="ECO:0000269" key="5">
    <source ref="7"/>
</evidence>
<evidence type="ECO:0000305" key="6"/>
<evidence type="ECO:0000305" key="7">
    <source>
    </source>
</evidence>
<evidence type="ECO:0000305" key="8">
    <source>
    </source>
</evidence>
<evidence type="ECO:0000305" key="9">
    <source>
    </source>
</evidence>
<evidence type="ECO:0000305" key="10">
    <source ref="7"/>
</evidence>
<evidence type="ECO:0007829" key="11">
    <source>
        <dbReference type="PDB" id="4KQI"/>
    </source>
</evidence>
<evidence type="ECO:0007829" key="12">
    <source>
        <dbReference type="PDB" id="4KQK"/>
    </source>
</evidence>
<keyword id="KW-0002">3D-structure</keyword>
<keyword id="KW-0169">Cobalamin biosynthesis</keyword>
<keyword id="KW-0328">Glycosyltransferase</keyword>
<keyword id="KW-0547">Nucleotide-binding</keyword>
<keyword id="KW-1185">Reference proteome</keyword>
<keyword id="KW-0808">Transferase</keyword>
<protein>
    <recommendedName>
        <fullName>Nicotinate-nucleotide--dimethylbenzimidazole phosphoribosyltransferase</fullName>
        <shortName>NN:DBI PRT</shortName>
        <ecNumber evidence="4">2.4.2.21</ecNumber>
    </recommendedName>
    <alternativeName>
        <fullName>N(1)-alpha-phosphoribosyltransferase</fullName>
    </alternativeName>
</protein>
<organism>
    <name type="scientific">Salmonella typhimurium (strain LT2 / SGSC1412 / ATCC 700720)</name>
    <dbReference type="NCBI Taxonomy" id="99287"/>
    <lineage>
        <taxon>Bacteria</taxon>
        <taxon>Pseudomonadati</taxon>
        <taxon>Pseudomonadota</taxon>
        <taxon>Gammaproteobacteria</taxon>
        <taxon>Enterobacterales</taxon>
        <taxon>Enterobacteriaceae</taxon>
        <taxon>Salmonella</taxon>
    </lineage>
</organism>
<reference key="1">
    <citation type="journal article" date="1995" name="J. Bacteriol.">
        <title>The end of the cob operon: evidence that the last gene (cobT) catalyzes synthesis of the lower ligand of vitamin B12, dimethylbenzimidazole.</title>
        <authorList>
            <person name="Chen P."/>
            <person name="Ailion M."/>
            <person name="Weyand N."/>
            <person name="Roth J.R."/>
        </authorList>
    </citation>
    <scope>NUCLEOTIDE SEQUENCE [GENOMIC DNA]</scope>
    <source>
        <strain>LT2</strain>
    </source>
</reference>
<reference key="2">
    <citation type="journal article" date="2001" name="Nature">
        <title>Complete genome sequence of Salmonella enterica serovar Typhimurium LT2.</title>
        <authorList>
            <person name="McClelland M."/>
            <person name="Sanderson K.E."/>
            <person name="Spieth J."/>
            <person name="Clifton S.W."/>
            <person name="Latreille P."/>
            <person name="Courtney L."/>
            <person name="Porwollik S."/>
            <person name="Ali J."/>
            <person name="Dante M."/>
            <person name="Du F."/>
            <person name="Hou S."/>
            <person name="Layman D."/>
            <person name="Leonard S."/>
            <person name="Nguyen C."/>
            <person name="Scott K."/>
            <person name="Holmes A."/>
            <person name="Grewal N."/>
            <person name="Mulvaney E."/>
            <person name="Ryan E."/>
            <person name="Sun H."/>
            <person name="Florea L."/>
            <person name="Miller W."/>
            <person name="Stoneking T."/>
            <person name="Nhan M."/>
            <person name="Waterston R."/>
            <person name="Wilson R.K."/>
        </authorList>
    </citation>
    <scope>NUCLEOTIDE SEQUENCE [LARGE SCALE GENOMIC DNA]</scope>
    <source>
        <strain>LT2 / SGSC1412 / ATCC 700720</strain>
    </source>
</reference>
<reference key="3">
    <citation type="journal article" date="1993" name="J. Bacteriol.">
        <title>Characterization of the cobalamin (vitamin B12) biosynthetic genes of Salmonella typhimurium.</title>
        <authorList>
            <person name="Roth J.R."/>
            <person name="Lawrence J.G."/>
            <person name="Rubenfield M."/>
            <person name="Kieffer-Higgins S."/>
            <person name="Church G.M."/>
        </authorList>
    </citation>
    <scope>NUCLEOTIDE SEQUENCE [GENOMIC DNA] OF 1-242</scope>
    <source>
        <strain>LT2</strain>
    </source>
</reference>
<reference key="4">
    <citation type="journal article" date="1994" name="J. Bacteriol.">
        <title>The cobT gene of Salmonella typhimurium encodes the NaMN: 5,6-dimethylbenzimidazole phosphoribosyltransferase responsible for the synthesis of N1-(5-phospho-alpha-D-ribosyl)-5,6-dimethylbenzimidazole, an intermediate in the synthesis of the nucleotide loop of cobalamin.</title>
        <authorList>
            <person name="Trzebiatowski J.R."/>
            <person name="O'Toole G.A."/>
            <person name="Escalante-Semerena J.C."/>
        </authorList>
    </citation>
    <scope>FUNCTION</scope>
    <scope>CATALYTIC ACTIVITY</scope>
    <scope>DISRUPTION PHENOTYPE</scope>
    <source>
        <strain>LT2</strain>
    </source>
</reference>
<reference key="5">
    <citation type="journal article" date="1999" name="Biochemistry">
        <title>The three-dimensional structures of nicotinate mononucleotide:5,6-dimethylbenzimidazole phosphoribosyltransferase (CobT) from Salmonella typhimurium complexed with 5,6-dimethybenzimidazole and its reaction products determined to 1.9-A resolution.</title>
        <authorList>
            <person name="Cheong C.-G."/>
            <person name="Escalante-Semerena J.C."/>
            <person name="Rayment I."/>
        </authorList>
    </citation>
    <scope>X-RAY CRYSTALLOGRAPHY (1.9 ANGSTROMS) IN COMPLEX WITH SUBSTRATE OR PRODUCTS</scope>
    <scope>SEQUENCE REVISION TO 158</scope>
    <scope>FUNCTION</scope>
    <scope>SUBUNIT</scope>
    <scope>SITE</scope>
</reference>
<reference key="6">
    <citation type="journal article" date="2001" name="J. Biol. Chem.">
        <title>Structural investigation of the biosynthesis of alternative lower ligands for cobamides by nicotinate mononucleotide: 5,6-dimethylbenzimidazole phosphoribosyltransferase from Salmonella enterica.</title>
        <authorList>
            <person name="Cheong C.G."/>
            <person name="Escalante-Semerena J.C."/>
            <person name="Rayment I."/>
        </authorList>
    </citation>
    <scope>X-RAY CRYSTALLOGRAPHY (1.80 ANGSTROMS) IN COMPLEX WITH SUBSTRATES OR PRODUCTS</scope>
    <scope>FUNCTION</scope>
    <scope>SUBSTRATE SPECIFICITY</scope>
</reference>
<reference key="7">
    <citation type="journal article" date="2002" name="J. Biol. Chem.">
        <title>Capture of a labile substrate by expulsion of water molecules from the active site of nicotinate mononucleotide:5,6-dimethylbenzimidazole phosphoribosyltransferase (CobT) from Salmonella enterica.</title>
        <authorList>
            <person name="Cheong C.G."/>
            <person name="Escalante-Semerena J.C."/>
            <person name="Rayment I."/>
        </authorList>
    </citation>
    <scope>X-RAY CRYSTALLOGRAPHY (1.60 ANGSTROMS) OF APOPROTEIN AND IN COMPLEX WITH NICOTINATE MONONUCLEOTIDE AND SUBSTRATE ANALOGS</scope>
    <scope>FUNCTION</scope>
    <scope>POSSIBLE REACTION MECHANISM</scope>
    <scope>SUBUNIT</scope>
</reference>
<reference key="8">
    <citation type="journal article" date="2014" name="Biochim. Biophys. Acta">
        <title>Dissecting cobamide diversity through structural and functional analyses of the base-activating CobT enzyme of Salmonella enterica.</title>
        <authorList>
            <person name="Chan C.H."/>
            <person name="Newmister S.A."/>
            <person name="Talyor K."/>
            <person name="Claas K.R."/>
            <person name="Rayment I."/>
            <person name="Escalante-Semerena J.C."/>
        </authorList>
    </citation>
    <scope>X-RAY CRYSTALLOGRAPHY (1.40 ANGSTROMS) OF MUTANT PROTEINS IN COMPLEX WITH NICOTINATE MONONUCLEOTIDE</scope>
    <scope>FUNCTION</scope>
    <scope>SUBUNIT</scope>
    <scope>MUTAGENESIS OF SER-80; GLN-88; GLU-174; LEU-175 AND GLU-317</scope>
    <source>
        <strain>LT2</strain>
    </source>
</reference>
<comment type="function">
    <text evidence="1 2 3 4 5">Catalyzes the synthesis of alpha-ribazole-5'-phosphate from nicotinate mononucleotide (NAMN) and 5,6-dimethylbenzimidazole (DMB) (PubMed:10587435, PubMed:11441022, PubMed:24121107, PubMed:8206834, Ref.7). Able to use a variety of other nucleotide bases as substrate to create alternative lower ligands for cobamide (PubMed:11441022, PubMed:24121107, Ref.7).</text>
</comment>
<comment type="catalytic activity">
    <reaction evidence="4">
        <text>5,6-dimethylbenzimidazole + nicotinate beta-D-ribonucleotide = alpha-ribazole 5'-phosphate + nicotinate + H(+)</text>
        <dbReference type="Rhea" id="RHEA:11196"/>
        <dbReference type="ChEBI" id="CHEBI:15378"/>
        <dbReference type="ChEBI" id="CHEBI:15890"/>
        <dbReference type="ChEBI" id="CHEBI:32544"/>
        <dbReference type="ChEBI" id="CHEBI:57502"/>
        <dbReference type="ChEBI" id="CHEBI:57918"/>
        <dbReference type="EC" id="2.4.2.21"/>
    </reaction>
</comment>
<comment type="pathway">
    <text>Nucleoside biosynthesis; alpha-ribazole biosynthesis; alpha-ribazole from 5,6-dimethylbenzimidazole: step 1/2.</text>
</comment>
<comment type="subunit">
    <text evidence="1 3 5">Homodimer.</text>
</comment>
<comment type="disruption phenotype">
    <text evidence="4">No growth on cobinamide (CBI); double cobB-cobT deletion mutants do not grow on CBI and DMB (PubMed:8206834).</text>
</comment>
<comment type="miscellaneous">
    <text evidence="9">In vitro assays of this enzyme are performed at pH 10 because at physiological pH (7.0) its activity is undetectable; this makes it difficult to assess the role of mutagenesis of potential proton acceptor active site residues (Glu-174 and Glu-317) (PubMed:24121107).</text>
</comment>
<comment type="similarity">
    <text evidence="6">Belongs to the CobT family.</text>
</comment>
<comment type="sequence caution" evidence="6">
    <conflict type="erroneous initiation">
        <sequence resource="EMBL-CDS" id="AAA27271"/>
    </conflict>
    <text>Extended N-terminus.</text>
</comment>
<comment type="sequence caution" evidence="6">
    <conflict type="erroneous initiation">
        <sequence resource="EMBL-CDS" id="AAA69297"/>
    </conflict>
    <text>Extended N-terminus.</text>
</comment>
<dbReference type="EC" id="2.4.2.21" evidence="4"/>
<dbReference type="EMBL" id="L35477">
    <property type="protein sequence ID" value="AAA69297.1"/>
    <property type="status" value="ALT_INIT"/>
    <property type="molecule type" value="Genomic_DNA"/>
</dbReference>
<dbReference type="EMBL" id="AE006468">
    <property type="protein sequence ID" value="AAL20920.1"/>
    <property type="molecule type" value="Genomic_DNA"/>
</dbReference>
<dbReference type="EMBL" id="L12006">
    <property type="protein sequence ID" value="AAA27271.1"/>
    <property type="status" value="ALT_INIT"/>
    <property type="molecule type" value="Genomic_DNA"/>
</dbReference>
<dbReference type="RefSeq" id="NP_460961.1">
    <property type="nucleotide sequence ID" value="NC_003197.2"/>
</dbReference>
<dbReference type="RefSeq" id="WP_001193983.1">
    <property type="nucleotide sequence ID" value="NC_003197.2"/>
</dbReference>
<dbReference type="PDB" id="1D0S">
    <property type="method" value="X-ray"/>
    <property type="resolution" value="1.90 A"/>
    <property type="chains" value="A=1-356"/>
</dbReference>
<dbReference type="PDB" id="1D0V">
    <property type="method" value="X-ray"/>
    <property type="resolution" value="1.90 A"/>
    <property type="chains" value="A=1-356"/>
</dbReference>
<dbReference type="PDB" id="1JH8">
    <property type="method" value="X-ray"/>
    <property type="resolution" value="1.80 A"/>
    <property type="chains" value="A=1-356"/>
</dbReference>
<dbReference type="PDB" id="1JHA">
    <property type="method" value="X-ray"/>
    <property type="resolution" value="2.00 A"/>
    <property type="chains" value="A=1-356"/>
</dbReference>
<dbReference type="PDB" id="1JHM">
    <property type="method" value="X-ray"/>
    <property type="resolution" value="2.20 A"/>
    <property type="chains" value="A=1-356"/>
</dbReference>
<dbReference type="PDB" id="1JHO">
    <property type="method" value="X-ray"/>
    <property type="resolution" value="2.00 A"/>
    <property type="chains" value="A=1-356"/>
</dbReference>
<dbReference type="PDB" id="1JHP">
    <property type="method" value="X-ray"/>
    <property type="resolution" value="2.20 A"/>
    <property type="chains" value="A=1-356"/>
</dbReference>
<dbReference type="PDB" id="1JHQ">
    <property type="method" value="X-ray"/>
    <property type="resolution" value="2.00 A"/>
    <property type="chains" value="A=1-356"/>
</dbReference>
<dbReference type="PDB" id="1JHR">
    <property type="method" value="X-ray"/>
    <property type="resolution" value="2.00 A"/>
    <property type="chains" value="A=1-356"/>
</dbReference>
<dbReference type="PDB" id="1JHU">
    <property type="method" value="X-ray"/>
    <property type="resolution" value="2.00 A"/>
    <property type="chains" value="A=1-356"/>
</dbReference>
<dbReference type="PDB" id="1JHV">
    <property type="method" value="X-ray"/>
    <property type="resolution" value="2.00 A"/>
    <property type="chains" value="A=1-356"/>
</dbReference>
<dbReference type="PDB" id="1JHX">
    <property type="method" value="X-ray"/>
    <property type="resolution" value="2.00 A"/>
    <property type="chains" value="A=1-356"/>
</dbReference>
<dbReference type="PDB" id="1JHY">
    <property type="method" value="X-ray"/>
    <property type="resolution" value="2.00 A"/>
    <property type="chains" value="A=1-356"/>
</dbReference>
<dbReference type="PDB" id="1L4B">
    <property type="method" value="X-ray"/>
    <property type="resolution" value="1.70 A"/>
    <property type="chains" value="A=1-356"/>
</dbReference>
<dbReference type="PDB" id="1L4E">
    <property type="method" value="X-ray"/>
    <property type="resolution" value="2.00 A"/>
    <property type="chains" value="A=1-356"/>
</dbReference>
<dbReference type="PDB" id="1L4F">
    <property type="method" value="X-ray"/>
    <property type="resolution" value="2.10 A"/>
    <property type="chains" value="A=1-356"/>
</dbReference>
<dbReference type="PDB" id="1L4G">
    <property type="method" value="X-ray"/>
    <property type="resolution" value="2.10 A"/>
    <property type="chains" value="A=1-356"/>
</dbReference>
<dbReference type="PDB" id="1L4H">
    <property type="method" value="X-ray"/>
    <property type="resolution" value="2.10 A"/>
    <property type="chains" value="A=1-356"/>
</dbReference>
<dbReference type="PDB" id="1L4K">
    <property type="method" value="X-ray"/>
    <property type="resolution" value="2.20 A"/>
    <property type="chains" value="A=1-356"/>
</dbReference>
<dbReference type="PDB" id="1L4L">
    <property type="method" value="X-ray"/>
    <property type="resolution" value="2.00 A"/>
    <property type="chains" value="A=1-356"/>
</dbReference>
<dbReference type="PDB" id="1L4M">
    <property type="method" value="X-ray"/>
    <property type="resolution" value="2.00 A"/>
    <property type="chains" value="A=1-356"/>
</dbReference>
<dbReference type="PDB" id="1L4N">
    <property type="method" value="X-ray"/>
    <property type="resolution" value="2.00 A"/>
    <property type="chains" value="A=1-356"/>
</dbReference>
<dbReference type="PDB" id="1L5F">
    <property type="method" value="X-ray"/>
    <property type="resolution" value="1.90 A"/>
    <property type="chains" value="A=1-356"/>
</dbReference>
<dbReference type="PDB" id="1L5K">
    <property type="method" value="X-ray"/>
    <property type="resolution" value="2.00 A"/>
    <property type="chains" value="A=1-356"/>
</dbReference>
<dbReference type="PDB" id="1L5L">
    <property type="method" value="X-ray"/>
    <property type="resolution" value="2.00 A"/>
    <property type="chains" value="A=1-356"/>
</dbReference>
<dbReference type="PDB" id="1L5M">
    <property type="method" value="X-ray"/>
    <property type="resolution" value="2.00 A"/>
    <property type="chains" value="A=1-356"/>
</dbReference>
<dbReference type="PDB" id="1L5N">
    <property type="method" value="X-ray"/>
    <property type="resolution" value="1.90 A"/>
    <property type="chains" value="A=1-356"/>
</dbReference>
<dbReference type="PDB" id="1L5O">
    <property type="method" value="X-ray"/>
    <property type="resolution" value="1.60 A"/>
    <property type="chains" value="A=1-356"/>
</dbReference>
<dbReference type="PDB" id="4KQF">
    <property type="method" value="X-ray"/>
    <property type="resolution" value="1.90 A"/>
    <property type="chains" value="A=1-356"/>
</dbReference>
<dbReference type="PDB" id="4KQG">
    <property type="method" value="X-ray"/>
    <property type="resolution" value="1.90 A"/>
    <property type="chains" value="A=1-356"/>
</dbReference>
<dbReference type="PDB" id="4KQH">
    <property type="method" value="X-ray"/>
    <property type="resolution" value="1.90 A"/>
    <property type="chains" value="A=1-356"/>
</dbReference>
<dbReference type="PDB" id="4KQI">
    <property type="method" value="X-ray"/>
    <property type="resolution" value="1.40 A"/>
    <property type="chains" value="A=1-356"/>
</dbReference>
<dbReference type="PDB" id="4KQJ">
    <property type="method" value="X-ray"/>
    <property type="resolution" value="1.95 A"/>
    <property type="chains" value="A=1-356"/>
</dbReference>
<dbReference type="PDB" id="4KQK">
    <property type="method" value="X-ray"/>
    <property type="resolution" value="1.47 A"/>
    <property type="chains" value="A/B=1-356"/>
</dbReference>
<dbReference type="PDBsum" id="1D0S"/>
<dbReference type="PDBsum" id="1D0V"/>
<dbReference type="PDBsum" id="1JH8"/>
<dbReference type="PDBsum" id="1JHA"/>
<dbReference type="PDBsum" id="1JHM"/>
<dbReference type="PDBsum" id="1JHO"/>
<dbReference type="PDBsum" id="1JHP"/>
<dbReference type="PDBsum" id="1JHQ"/>
<dbReference type="PDBsum" id="1JHR"/>
<dbReference type="PDBsum" id="1JHU"/>
<dbReference type="PDBsum" id="1JHV"/>
<dbReference type="PDBsum" id="1JHX"/>
<dbReference type="PDBsum" id="1JHY"/>
<dbReference type="PDBsum" id="1L4B"/>
<dbReference type="PDBsum" id="1L4E"/>
<dbReference type="PDBsum" id="1L4F"/>
<dbReference type="PDBsum" id="1L4G"/>
<dbReference type="PDBsum" id="1L4H"/>
<dbReference type="PDBsum" id="1L4K"/>
<dbReference type="PDBsum" id="1L4L"/>
<dbReference type="PDBsum" id="1L4M"/>
<dbReference type="PDBsum" id="1L4N"/>
<dbReference type="PDBsum" id="1L5F"/>
<dbReference type="PDBsum" id="1L5K"/>
<dbReference type="PDBsum" id="1L5L"/>
<dbReference type="PDBsum" id="1L5M"/>
<dbReference type="PDBsum" id="1L5N"/>
<dbReference type="PDBsum" id="1L5O"/>
<dbReference type="PDBsum" id="4KQF"/>
<dbReference type="PDBsum" id="4KQG"/>
<dbReference type="PDBsum" id="4KQH"/>
<dbReference type="PDBsum" id="4KQI"/>
<dbReference type="PDBsum" id="4KQJ"/>
<dbReference type="PDBsum" id="4KQK"/>
<dbReference type="SMR" id="Q05603"/>
<dbReference type="STRING" id="99287.STM2016"/>
<dbReference type="DrugBank" id="DB02163">
    <property type="generic name" value="2,5-Xylidine"/>
</dbReference>
<dbReference type="DrugBank" id="DB04533">
    <property type="generic name" value="2-Amino-4-methylphenol"/>
</dbReference>
<dbReference type="DrugBank" id="DB01726">
    <property type="generic name" value="2-Aminophenol"/>
</dbReference>
<dbReference type="DrugBank" id="DB03018">
    <property type="generic name" value="3,4-dimethylaniline"/>
</dbReference>
<dbReference type="DrugBank" id="DB04052">
    <property type="generic name" value="3,4-Xylenol"/>
</dbReference>
<dbReference type="DrugBank" id="DB03180">
    <property type="generic name" value="4,5-Dimethyl-1,2-phenylenediamine"/>
</dbReference>
<dbReference type="DrugBank" id="DB04120">
    <property type="generic name" value="4-Methyl-1,2-Benzenediol"/>
</dbReference>
<dbReference type="DrugBank" id="DB02591">
    <property type="generic name" value="5,6-Dimethylbenzimidazole"/>
</dbReference>
<dbReference type="DrugBank" id="DB04130">
    <property type="generic name" value="5-Methoxybenzimidazole"/>
</dbReference>
<dbReference type="DrugBank" id="DB03177">
    <property type="generic name" value="5-methylbenzimidazole"/>
</dbReference>
<dbReference type="DrugBank" id="DB02770">
    <property type="generic name" value="7-alpha-D-Ribofuranosyl-2-aminopurine-5'-phosphate"/>
</dbReference>
<dbReference type="DrugBank" id="DB03200">
    <property type="generic name" value="7-Alpha-D-Ribofuranosyl-Purine-5'-Phosphate"/>
</dbReference>
<dbReference type="DrugBank" id="DB00173">
    <property type="generic name" value="Adenine"/>
</dbReference>
<dbReference type="DrugBank" id="DB03887">
    <property type="generic name" value="Alpha-Adenosine Monophosphate"/>
</dbReference>
<dbReference type="DrugBank" id="DB02030">
    <property type="generic name" value="Alpha-Ribazole-5'-Phosphate"/>
</dbReference>
<dbReference type="DrugBank" id="DB03079">
    <property type="generic name" value="Alpha-Ribazole-5'-Phosphate Derivative"/>
</dbReference>
<dbReference type="DrugBank" id="DB02962">
    <property type="generic name" value="Benzimidazole"/>
</dbReference>
<dbReference type="DrugBank" id="DB03366">
    <property type="generic name" value="Imidazole"/>
</dbReference>
<dbReference type="DrugBank" id="DB04532">
    <property type="generic name" value="Indole"/>
</dbReference>
<dbReference type="DrugBank" id="DB02819">
    <property type="generic name" value="Mono-[3,4-Dihydroxy-5-(5-Methyl-Benzoimidazol-1-Yl)-Tetrahydor-Furan-2-Ylmethyl] Ester"/>
</dbReference>
<dbReference type="DrugBank" id="DB02905">
    <property type="generic name" value="N7-(5'-Phospho-alpha-ribosyl)-2-hydroxypurine"/>
</dbReference>
<dbReference type="DrugBank" id="DB02382">
    <property type="generic name" value="Namn"/>
</dbReference>
<dbReference type="DrugBank" id="DB01688">
    <property type="generic name" value="P-Cresol"/>
</dbReference>
<dbReference type="DrugBank" id="DB04176">
    <property type="generic name" value="Phosporic Acid Mono-[3,4-Dihydroxy-5-(5-Methoxy-Benzoimidazol-1-Yl)-Tetrahydro-Furan-2-Ylmethyl] Ester"/>
</dbReference>
<dbReference type="PaxDb" id="99287-STM2016"/>
<dbReference type="GeneID" id="1253537"/>
<dbReference type="KEGG" id="stm:STM2016"/>
<dbReference type="PATRIC" id="fig|99287.12.peg.2138"/>
<dbReference type="HOGENOM" id="CLU_002982_0_0_6"/>
<dbReference type="OMA" id="AWMRKCA"/>
<dbReference type="PhylomeDB" id="Q05603"/>
<dbReference type="BioCyc" id="MetaCyc:MONOMER-13214"/>
<dbReference type="BioCyc" id="SENT99287:STM2016-MONOMER"/>
<dbReference type="BRENDA" id="2.4.2.21">
    <property type="organism ID" value="2169"/>
</dbReference>
<dbReference type="UniPathway" id="UPA00061">
    <property type="reaction ID" value="UER00516"/>
</dbReference>
<dbReference type="EvolutionaryTrace" id="Q05603"/>
<dbReference type="Proteomes" id="UP000001014">
    <property type="component" value="Chromosome"/>
</dbReference>
<dbReference type="GO" id="GO:0008939">
    <property type="term" value="F:nicotinate-nucleotide-dimethylbenzimidazole phosphoribosyltransferase activity"/>
    <property type="evidence" value="ECO:0000314"/>
    <property type="project" value="CACAO"/>
</dbReference>
<dbReference type="GO" id="GO:0000166">
    <property type="term" value="F:nucleotide binding"/>
    <property type="evidence" value="ECO:0007669"/>
    <property type="project" value="UniProtKB-KW"/>
</dbReference>
<dbReference type="GO" id="GO:0009236">
    <property type="term" value="P:cobalamin biosynthetic process"/>
    <property type="evidence" value="ECO:0007669"/>
    <property type="project" value="UniProtKB-KW"/>
</dbReference>
<dbReference type="CDD" id="cd02439">
    <property type="entry name" value="DMB-PRT_CobT"/>
    <property type="match status" value="1"/>
</dbReference>
<dbReference type="FunFam" id="1.10.1610.10:FF:000001">
    <property type="entry name" value="Nicotinate-nucleotide--dimethylbenzimidazole phosphoribosyltransferase"/>
    <property type="match status" value="1"/>
</dbReference>
<dbReference type="FunFam" id="3.40.50.10210:FF:000001">
    <property type="entry name" value="Nicotinate-nucleotide--dimethylbenzimidazole phosphoribosyltransferase"/>
    <property type="match status" value="1"/>
</dbReference>
<dbReference type="Gene3D" id="1.10.1610.10">
    <property type="match status" value="1"/>
</dbReference>
<dbReference type="Gene3D" id="3.40.50.10210">
    <property type="match status" value="1"/>
</dbReference>
<dbReference type="HAMAP" id="MF_00230">
    <property type="entry name" value="CobT"/>
    <property type="match status" value="1"/>
</dbReference>
<dbReference type="InterPro" id="IPR003200">
    <property type="entry name" value="Nict_dMeBzImd_PRibTrfase"/>
</dbReference>
<dbReference type="InterPro" id="IPR017846">
    <property type="entry name" value="Nict_dMeBzImd_PRibTrfase_bact"/>
</dbReference>
<dbReference type="InterPro" id="IPR023195">
    <property type="entry name" value="Nict_dMeBzImd_PRibTrfase_N"/>
</dbReference>
<dbReference type="InterPro" id="IPR036087">
    <property type="entry name" value="Nict_dMeBzImd_PRibTrfase_sf"/>
</dbReference>
<dbReference type="NCBIfam" id="TIGR03160">
    <property type="entry name" value="cobT_DBIPRT"/>
    <property type="match status" value="1"/>
</dbReference>
<dbReference type="NCBIfam" id="NF000996">
    <property type="entry name" value="PRK00105.1"/>
    <property type="match status" value="1"/>
</dbReference>
<dbReference type="PANTHER" id="PTHR43463">
    <property type="entry name" value="NICOTINATE-NUCLEOTIDE--DIMETHYLBENZIMIDAZOLE PHOSPHORIBOSYLTRANSFERASE"/>
    <property type="match status" value="1"/>
</dbReference>
<dbReference type="PANTHER" id="PTHR43463:SF1">
    <property type="entry name" value="NICOTINATE-NUCLEOTIDE--DIMETHYLBENZIMIDAZOLE PHOSPHORIBOSYLTRANSFERASE"/>
    <property type="match status" value="1"/>
</dbReference>
<dbReference type="Pfam" id="PF02277">
    <property type="entry name" value="DBI_PRT"/>
    <property type="match status" value="1"/>
</dbReference>
<dbReference type="SUPFAM" id="SSF52733">
    <property type="entry name" value="Nicotinate mononucleotide:5,6-dimethylbenzimidazole phosphoribosyltransferase (CobT)"/>
    <property type="match status" value="1"/>
</dbReference>
<feature type="chain" id="PRO_0000167069" description="Nicotinate-nucleotide--dimethylbenzimidazole phosphoribosyltransferase">
    <location>
        <begin position="1"/>
        <end position="356"/>
    </location>
</feature>
<feature type="binding site" evidence="8">
    <location>
        <position position="88"/>
    </location>
    <ligand>
        <name>substrate</name>
    </ligand>
</feature>
<feature type="binding site" evidence="3 5">
    <location>
        <begin position="174"/>
        <end position="180"/>
    </location>
    <ligand>
        <name>nicotinate beta-D-ribonucleotide</name>
        <dbReference type="ChEBI" id="CHEBI:57502"/>
    </ligand>
</feature>
<feature type="binding site" evidence="3 5">
    <location>
        <position position="203"/>
    </location>
    <ligand>
        <name>nicotinate beta-D-ribonucleotide</name>
        <dbReference type="ChEBI" id="CHEBI:57502"/>
    </ligand>
</feature>
<feature type="binding site" evidence="3 5">
    <location>
        <position position="265"/>
    </location>
    <ligand>
        <name>nicotinate beta-D-ribonucleotide</name>
        <dbReference type="ChEBI" id="CHEBI:57502"/>
    </ligand>
</feature>
<feature type="binding site" evidence="3 5">
    <location>
        <position position="291"/>
    </location>
    <ligand>
        <name>nicotinate beta-D-ribonucleotide</name>
        <dbReference type="ChEBI" id="CHEBI:57502"/>
    </ligand>
</feature>
<feature type="binding site" evidence="3 5">
    <location>
        <begin position="314"/>
        <end position="315"/>
    </location>
    <ligand>
        <name>nicotinate beta-D-ribonucleotide</name>
        <dbReference type="ChEBI" id="CHEBI:57502"/>
    </ligand>
</feature>
<feature type="site" description="Important for substrate positioning, might be proton acceptor" evidence="3">
    <location>
        <position position="174"/>
    </location>
</feature>
<feature type="site" description="Important for substrate positioning, might be proton acceptor" evidence="3 7 10">
    <location>
        <position position="317"/>
    </location>
</feature>
<feature type="mutagenesis site" description="Alters specificity to use phenolic compounds as substrate; when associated with M-88 and M-175." evidence="3">
    <original>S</original>
    <variation>Y</variation>
    <location>
        <position position="80"/>
    </location>
</feature>
<feature type="mutagenesis site" description="Alters specificity to use phenolic compounds as substrate; when associated with Y-80 and M-175." evidence="3">
    <original>Q</original>
    <variation>M</variation>
    <location>
        <position position="88"/>
    </location>
</feature>
<feature type="mutagenesis site" description="Decreases specific activity for DMB and adenine about 20-fold. Decreases specific activity 1600- to 15000-fold; when associated with A-317." evidence="3">
    <original>E</original>
    <variation>A</variation>
    <location>
        <position position="174"/>
    </location>
</feature>
<feature type="mutagenesis site" description="Alters specificity to use phenolic compounds as substrate; when associated with Y-80 and M-88." evidence="3">
    <original>L</original>
    <variation>M</variation>
    <location>
        <position position="175"/>
    </location>
</feature>
<feature type="mutagenesis site" description="Decreases specific activity for DMB and adenine about 50-fold; crystals bind substrate less well. Decreases specific activity 1600- to 15000-fold; when associated with A-174." evidence="3">
    <original>E</original>
    <variation>A</variation>
    <location>
        <position position="317"/>
    </location>
</feature>
<feature type="sequence conflict" description="In Ref. 1; AAA69297 and 3; AAA27271." evidence="6" ref="1 3">
    <original>A</original>
    <variation>T</variation>
    <location>
        <position position="22"/>
    </location>
</feature>
<feature type="sequence conflict" description="In Ref. 1; AAA69297 and 3; AAA27271." evidence="6" ref="1 3">
    <original>YT</original>
    <variation>CA</variation>
    <location>
        <begin position="158"/>
        <end position="159"/>
    </location>
</feature>
<feature type="helix" evidence="11">
    <location>
        <begin position="4"/>
        <end position="9"/>
    </location>
</feature>
<feature type="helix" evidence="11">
    <location>
        <begin position="16"/>
        <end position="27"/>
    </location>
</feature>
<feature type="strand" evidence="11">
    <location>
        <begin position="29"/>
        <end position="31"/>
    </location>
</feature>
<feature type="turn" evidence="11">
    <location>
        <begin position="33"/>
        <end position="36"/>
    </location>
</feature>
<feature type="helix" evidence="11">
    <location>
        <begin position="37"/>
        <end position="47"/>
    </location>
</feature>
<feature type="helix" evidence="11">
    <location>
        <begin position="50"/>
        <end position="52"/>
    </location>
</feature>
<feature type="strand" evidence="11">
    <location>
        <begin position="60"/>
        <end position="68"/>
    </location>
</feature>
<feature type="helix" evidence="11">
    <location>
        <begin position="71"/>
        <end position="75"/>
    </location>
</feature>
<feature type="helix" evidence="11">
    <location>
        <begin position="84"/>
        <end position="93"/>
    </location>
</feature>
<feature type="helix" evidence="11">
    <location>
        <begin position="98"/>
        <end position="106"/>
    </location>
</feature>
<feature type="strand" evidence="11">
    <location>
        <begin position="109"/>
        <end position="116"/>
    </location>
</feature>
<feature type="strand" evidence="11">
    <location>
        <begin position="118"/>
        <end position="120"/>
    </location>
</feature>
<feature type="strand" evidence="11">
    <location>
        <begin position="125"/>
        <end position="127"/>
    </location>
</feature>
<feature type="strand" evidence="11">
    <location>
        <begin position="131"/>
        <end position="134"/>
    </location>
</feature>
<feature type="turn" evidence="11">
    <location>
        <begin position="137"/>
        <end position="139"/>
    </location>
</feature>
<feature type="helix" evidence="11">
    <location>
        <begin position="145"/>
        <end position="164"/>
    </location>
</feature>
<feature type="strand" evidence="11">
    <location>
        <begin position="167"/>
        <end position="175"/>
    </location>
</feature>
<feature type="turn" evidence="11">
    <location>
        <begin position="177"/>
        <end position="179"/>
    </location>
</feature>
<feature type="helix" evidence="11">
    <location>
        <begin position="180"/>
        <end position="191"/>
    </location>
</feature>
<feature type="helix" evidence="11">
    <location>
        <begin position="195"/>
        <end position="198"/>
    </location>
</feature>
<feature type="turn" evidence="11">
    <location>
        <begin position="202"/>
        <end position="204"/>
    </location>
</feature>
<feature type="helix" evidence="11">
    <location>
        <begin position="207"/>
        <end position="209"/>
    </location>
</feature>
<feature type="helix" evidence="11">
    <location>
        <begin position="210"/>
        <end position="224"/>
    </location>
</feature>
<feature type="helix" evidence="11">
    <location>
        <begin position="231"/>
        <end position="238"/>
    </location>
</feature>
<feature type="helix" evidence="11">
    <location>
        <begin position="241"/>
        <end position="255"/>
    </location>
</feature>
<feature type="helix" evidence="11">
    <location>
        <begin position="265"/>
        <end position="277"/>
    </location>
</feature>
<feature type="helix" evidence="11">
    <location>
        <begin position="279"/>
        <end position="284"/>
    </location>
</feature>
<feature type="helix" evidence="11">
    <location>
        <begin position="296"/>
        <end position="302"/>
    </location>
</feature>
<feature type="helix" evidence="11">
    <location>
        <begin position="319"/>
        <end position="337"/>
    </location>
</feature>
<feature type="helix" evidence="12">
    <location>
        <begin position="341"/>
        <end position="344"/>
    </location>
</feature>
<proteinExistence type="evidence at protein level"/>
<accession>Q05603</accession>
<gene>
    <name type="primary">cobT</name>
    <name type="ordered locus">STM2016</name>
</gene>
<sequence length="356" mass="36613">MQTLHALLRDIPAPDAEAMARAQQHIDGLLKPPGSLGRLETLAVQLAGMPGLNGTPQVGEKAVLVMCADHGVWDEGVAVSPKIVTAIQAANMTRGTTGVCVLAAQAGAKVHVIDVGIDAEPIPGVVNMRVARGCGNIAVGPAMSRLQAEALLLEVSRYTCDLAQRGVTLFGVGELGMANTTPAAAMVSVFTGSDAKEVVGIGANLPPSRIDNKVDVVRRAIAINQPNPRDGIDVLSKVGGFDLVGMTGVMLGAARCGLPVLLDGFLSYSAALAACQIAPAVRPYLIPSHFSAEKGARIALAHLSMEPYLHMAMRLGEGSGAALAMPIVEAACAMFHNMGELAASNIVLPEGNANAT</sequence>
<name>COBT_SALTY</name>